<name>DNAA_YERP3</name>
<accession>A7FPB7</accession>
<gene>
    <name evidence="1" type="primary">dnaA</name>
    <name type="ordered locus">YpsIP31758_4153</name>
</gene>
<dbReference type="EMBL" id="CP000720">
    <property type="protein sequence ID" value="ABS49624.1"/>
    <property type="molecule type" value="Genomic_DNA"/>
</dbReference>
<dbReference type="RefSeq" id="WP_002220732.1">
    <property type="nucleotide sequence ID" value="NC_009708.1"/>
</dbReference>
<dbReference type="BMRB" id="A7FPB7"/>
<dbReference type="SMR" id="A7FPB7"/>
<dbReference type="GeneID" id="57974625"/>
<dbReference type="KEGG" id="ypi:YpsIP31758_4153"/>
<dbReference type="HOGENOM" id="CLU_026910_0_1_6"/>
<dbReference type="Proteomes" id="UP000002412">
    <property type="component" value="Chromosome"/>
</dbReference>
<dbReference type="GO" id="GO:0005737">
    <property type="term" value="C:cytoplasm"/>
    <property type="evidence" value="ECO:0007669"/>
    <property type="project" value="UniProtKB-SubCell"/>
</dbReference>
<dbReference type="GO" id="GO:0005886">
    <property type="term" value="C:plasma membrane"/>
    <property type="evidence" value="ECO:0007669"/>
    <property type="project" value="TreeGrafter"/>
</dbReference>
<dbReference type="GO" id="GO:0005524">
    <property type="term" value="F:ATP binding"/>
    <property type="evidence" value="ECO:0007669"/>
    <property type="project" value="UniProtKB-UniRule"/>
</dbReference>
<dbReference type="GO" id="GO:0016887">
    <property type="term" value="F:ATP hydrolysis activity"/>
    <property type="evidence" value="ECO:0007669"/>
    <property type="project" value="InterPro"/>
</dbReference>
<dbReference type="GO" id="GO:0003688">
    <property type="term" value="F:DNA replication origin binding"/>
    <property type="evidence" value="ECO:0007669"/>
    <property type="project" value="UniProtKB-UniRule"/>
</dbReference>
<dbReference type="GO" id="GO:0008289">
    <property type="term" value="F:lipid binding"/>
    <property type="evidence" value="ECO:0007669"/>
    <property type="project" value="UniProtKB-KW"/>
</dbReference>
<dbReference type="GO" id="GO:0006270">
    <property type="term" value="P:DNA replication initiation"/>
    <property type="evidence" value="ECO:0007669"/>
    <property type="project" value="UniProtKB-UniRule"/>
</dbReference>
<dbReference type="GO" id="GO:0006275">
    <property type="term" value="P:regulation of DNA replication"/>
    <property type="evidence" value="ECO:0007669"/>
    <property type="project" value="UniProtKB-UniRule"/>
</dbReference>
<dbReference type="CDD" id="cd00009">
    <property type="entry name" value="AAA"/>
    <property type="match status" value="1"/>
</dbReference>
<dbReference type="CDD" id="cd06571">
    <property type="entry name" value="Bac_DnaA_C"/>
    <property type="match status" value="1"/>
</dbReference>
<dbReference type="FunFam" id="1.10.1750.10:FF:000001">
    <property type="entry name" value="Chromosomal replication initiator protein DnaA"/>
    <property type="match status" value="1"/>
</dbReference>
<dbReference type="FunFam" id="1.10.8.60:FF:000003">
    <property type="entry name" value="Chromosomal replication initiator protein DnaA"/>
    <property type="match status" value="1"/>
</dbReference>
<dbReference type="FunFam" id="3.30.300.180:FF:000001">
    <property type="entry name" value="Chromosomal replication initiator protein DnaA"/>
    <property type="match status" value="1"/>
</dbReference>
<dbReference type="FunFam" id="3.40.50.300:FF:000103">
    <property type="entry name" value="Chromosomal replication initiator protein DnaA"/>
    <property type="match status" value="1"/>
</dbReference>
<dbReference type="Gene3D" id="1.10.1750.10">
    <property type="match status" value="1"/>
</dbReference>
<dbReference type="Gene3D" id="1.10.8.60">
    <property type="match status" value="1"/>
</dbReference>
<dbReference type="Gene3D" id="3.30.300.180">
    <property type="match status" value="1"/>
</dbReference>
<dbReference type="Gene3D" id="3.40.50.300">
    <property type="entry name" value="P-loop containing nucleotide triphosphate hydrolases"/>
    <property type="match status" value="1"/>
</dbReference>
<dbReference type="HAMAP" id="MF_00377">
    <property type="entry name" value="DnaA_bact"/>
    <property type="match status" value="1"/>
</dbReference>
<dbReference type="InterPro" id="IPR003593">
    <property type="entry name" value="AAA+_ATPase"/>
</dbReference>
<dbReference type="InterPro" id="IPR001957">
    <property type="entry name" value="Chromosome_initiator_DnaA"/>
</dbReference>
<dbReference type="InterPro" id="IPR020591">
    <property type="entry name" value="Chromosome_initiator_DnaA-like"/>
</dbReference>
<dbReference type="InterPro" id="IPR018312">
    <property type="entry name" value="Chromosome_initiator_DnaA_CS"/>
</dbReference>
<dbReference type="InterPro" id="IPR013159">
    <property type="entry name" value="DnaA_C"/>
</dbReference>
<dbReference type="InterPro" id="IPR013317">
    <property type="entry name" value="DnaA_dom"/>
</dbReference>
<dbReference type="InterPro" id="IPR024633">
    <property type="entry name" value="DnaA_N_dom"/>
</dbReference>
<dbReference type="InterPro" id="IPR038454">
    <property type="entry name" value="DnaA_N_sf"/>
</dbReference>
<dbReference type="InterPro" id="IPR027417">
    <property type="entry name" value="P-loop_NTPase"/>
</dbReference>
<dbReference type="InterPro" id="IPR010921">
    <property type="entry name" value="Trp_repressor/repl_initiator"/>
</dbReference>
<dbReference type="NCBIfam" id="TIGR00362">
    <property type="entry name" value="DnaA"/>
    <property type="match status" value="1"/>
</dbReference>
<dbReference type="PANTHER" id="PTHR30050">
    <property type="entry name" value="CHROMOSOMAL REPLICATION INITIATOR PROTEIN DNAA"/>
    <property type="match status" value="1"/>
</dbReference>
<dbReference type="PANTHER" id="PTHR30050:SF2">
    <property type="entry name" value="CHROMOSOMAL REPLICATION INITIATOR PROTEIN DNAA"/>
    <property type="match status" value="1"/>
</dbReference>
<dbReference type="Pfam" id="PF00308">
    <property type="entry name" value="Bac_DnaA"/>
    <property type="match status" value="1"/>
</dbReference>
<dbReference type="Pfam" id="PF08299">
    <property type="entry name" value="Bac_DnaA_C"/>
    <property type="match status" value="1"/>
</dbReference>
<dbReference type="Pfam" id="PF11638">
    <property type="entry name" value="DnaA_N"/>
    <property type="match status" value="1"/>
</dbReference>
<dbReference type="PRINTS" id="PR00051">
    <property type="entry name" value="DNAA"/>
</dbReference>
<dbReference type="SMART" id="SM00382">
    <property type="entry name" value="AAA"/>
    <property type="match status" value="1"/>
</dbReference>
<dbReference type="SMART" id="SM00760">
    <property type="entry name" value="Bac_DnaA_C"/>
    <property type="match status" value="1"/>
</dbReference>
<dbReference type="SUPFAM" id="SSF52540">
    <property type="entry name" value="P-loop containing nucleoside triphosphate hydrolases"/>
    <property type="match status" value="1"/>
</dbReference>
<dbReference type="SUPFAM" id="SSF48295">
    <property type="entry name" value="TrpR-like"/>
    <property type="match status" value="1"/>
</dbReference>
<dbReference type="PROSITE" id="PS01008">
    <property type="entry name" value="DNAA"/>
    <property type="match status" value="1"/>
</dbReference>
<feature type="chain" id="PRO_1000060023" description="Chromosomal replication initiator protein DnaA">
    <location>
        <begin position="1"/>
        <end position="462"/>
    </location>
</feature>
<feature type="region of interest" description="Domain I, interacts with DnaA modulators" evidence="1">
    <location>
        <begin position="1"/>
        <end position="83"/>
    </location>
</feature>
<feature type="region of interest" description="Domain II" evidence="1">
    <location>
        <begin position="83"/>
        <end position="125"/>
    </location>
</feature>
<feature type="region of interest" description="Disordered" evidence="2">
    <location>
        <begin position="104"/>
        <end position="125"/>
    </location>
</feature>
<feature type="region of interest" description="Domain III, AAA+ region" evidence="1">
    <location>
        <begin position="126"/>
        <end position="342"/>
    </location>
</feature>
<feature type="region of interest" description="Domain IV, binds dsDNA" evidence="1">
    <location>
        <begin position="343"/>
        <end position="462"/>
    </location>
</feature>
<feature type="compositionally biased region" description="Polar residues" evidence="2">
    <location>
        <begin position="112"/>
        <end position="125"/>
    </location>
</feature>
<feature type="binding site" evidence="1">
    <location>
        <position position="170"/>
    </location>
    <ligand>
        <name>ATP</name>
        <dbReference type="ChEBI" id="CHEBI:30616"/>
    </ligand>
</feature>
<feature type="binding site" evidence="1">
    <location>
        <position position="172"/>
    </location>
    <ligand>
        <name>ATP</name>
        <dbReference type="ChEBI" id="CHEBI:30616"/>
    </ligand>
</feature>
<feature type="binding site" evidence="1">
    <location>
        <position position="173"/>
    </location>
    <ligand>
        <name>ATP</name>
        <dbReference type="ChEBI" id="CHEBI:30616"/>
    </ligand>
</feature>
<feature type="binding site" evidence="1">
    <location>
        <position position="174"/>
    </location>
    <ligand>
        <name>ATP</name>
        <dbReference type="ChEBI" id="CHEBI:30616"/>
    </ligand>
</feature>
<proteinExistence type="inferred from homology"/>
<reference key="1">
    <citation type="journal article" date="2007" name="PLoS Genet.">
        <title>The complete genome sequence of Yersinia pseudotuberculosis IP31758, the causative agent of Far East scarlet-like fever.</title>
        <authorList>
            <person name="Eppinger M."/>
            <person name="Rosovitz M.J."/>
            <person name="Fricke W.F."/>
            <person name="Rasko D.A."/>
            <person name="Kokorina G."/>
            <person name="Fayolle C."/>
            <person name="Lindler L.E."/>
            <person name="Carniel E."/>
            <person name="Ravel J."/>
        </authorList>
    </citation>
    <scope>NUCLEOTIDE SEQUENCE [LARGE SCALE GENOMIC DNA]</scope>
    <source>
        <strain>IP 31758</strain>
    </source>
</reference>
<protein>
    <recommendedName>
        <fullName evidence="1">Chromosomal replication initiator protein DnaA</fullName>
    </recommendedName>
</protein>
<organism>
    <name type="scientific">Yersinia pseudotuberculosis serotype O:1b (strain IP 31758)</name>
    <dbReference type="NCBI Taxonomy" id="349747"/>
    <lineage>
        <taxon>Bacteria</taxon>
        <taxon>Pseudomonadati</taxon>
        <taxon>Pseudomonadota</taxon>
        <taxon>Gammaproteobacteria</taxon>
        <taxon>Enterobacterales</taxon>
        <taxon>Yersiniaceae</taxon>
        <taxon>Yersinia</taxon>
    </lineage>
</organism>
<keyword id="KW-0067">ATP-binding</keyword>
<keyword id="KW-0963">Cytoplasm</keyword>
<keyword id="KW-0235">DNA replication</keyword>
<keyword id="KW-0238">DNA-binding</keyword>
<keyword id="KW-0446">Lipid-binding</keyword>
<keyword id="KW-0547">Nucleotide-binding</keyword>
<comment type="function">
    <text evidence="1">Plays an essential role in the initiation and regulation of chromosomal replication. ATP-DnaA binds to the origin of replication (oriC) to initiate formation of the DNA replication initiation complex once per cell cycle. Binds the DnaA box (a 9 base pair repeat at the origin) and separates the double-stranded (ds)DNA. Forms a right-handed helical filament on oriC DNA; dsDNA binds to the exterior of the filament while single-stranded (ss)DNA is stabiized in the filament's interior. The ATP-DnaA-oriC complex binds and stabilizes one strand of the AT-rich DNA unwinding element (DUE), permitting loading of DNA polymerase. After initiation quickly degrades to an ADP-DnaA complex that is not apt for DNA replication. Binds acidic phospholipids.</text>
</comment>
<comment type="subunit">
    <text evidence="1">Oligomerizes as a right-handed, spiral filament on DNA at oriC.</text>
</comment>
<comment type="subcellular location">
    <subcellularLocation>
        <location evidence="1">Cytoplasm</location>
    </subcellularLocation>
</comment>
<comment type="domain">
    <text evidence="1">Domain I is involved in oligomerization and binding regulators, domain II is flexibile and of varying length in different bacteria, domain III forms the AAA+ region, while domain IV binds dsDNA.</text>
</comment>
<comment type="similarity">
    <text evidence="1">Belongs to the DnaA family.</text>
</comment>
<sequence>MSLSLWQQCLARLQDELPATEFSMWIRPLQAELSDNTLALYAPNRFVLDWVRDKYLNNINGLLNDFCGTEVPLLRFEVGSKPAARAHNNPVTASVSAPVAPVTRSAPMRPSWDNSPAQPELSYRSNVNPKHTFDNFVEGKSNQLARAAARQVADNPGGAYNPLFLYGGTGLGKTHLLHAVGNGIMARKANAKVVYMHSERFVQDMVKALQNNAIEEFKRYYRSVDALLIDDIQFFANKERSQEEFFHTFNALLEGNQQIILTSDRYPKEINGVEDRLKSRFGWGLTVAIEPPELETRVAILMKKADENDIRLPGEVAFFIAKRLRSNVRELEGALNRVIANANFTGRAITIDFVREALRDLLALQEKLVTIDNIQKTVAEYYKIKVADLLSKRRSRSVARPRQMAMALAKELTNHSLPEIGDAFGGRDHTTVLHACRKIEQLREESHDIKEDFSNLIRTLSS</sequence>
<evidence type="ECO:0000255" key="1">
    <source>
        <dbReference type="HAMAP-Rule" id="MF_00377"/>
    </source>
</evidence>
<evidence type="ECO:0000256" key="2">
    <source>
        <dbReference type="SAM" id="MobiDB-lite"/>
    </source>
</evidence>